<dbReference type="EMBL" id="CP000114">
    <property type="protein sequence ID" value="ABA45861.1"/>
    <property type="molecule type" value="Genomic_DNA"/>
</dbReference>
<dbReference type="RefSeq" id="WP_000615920.1">
    <property type="nucleotide sequence ID" value="NC_007432.1"/>
</dbReference>
<dbReference type="SMR" id="Q3K3V9"/>
<dbReference type="GeneID" id="83689563"/>
<dbReference type="KEGG" id="sak:SAK_0101"/>
<dbReference type="HOGENOM" id="CLU_095071_2_1_9"/>
<dbReference type="GO" id="GO:0022625">
    <property type="term" value="C:cytosolic large ribosomal subunit"/>
    <property type="evidence" value="ECO:0007669"/>
    <property type="project" value="TreeGrafter"/>
</dbReference>
<dbReference type="GO" id="GO:0070180">
    <property type="term" value="F:large ribosomal subunit rRNA binding"/>
    <property type="evidence" value="ECO:0007669"/>
    <property type="project" value="TreeGrafter"/>
</dbReference>
<dbReference type="GO" id="GO:0003735">
    <property type="term" value="F:structural constituent of ribosome"/>
    <property type="evidence" value="ECO:0007669"/>
    <property type="project" value="InterPro"/>
</dbReference>
<dbReference type="GO" id="GO:0006412">
    <property type="term" value="P:translation"/>
    <property type="evidence" value="ECO:0007669"/>
    <property type="project" value="UniProtKB-UniRule"/>
</dbReference>
<dbReference type="CDD" id="cd00337">
    <property type="entry name" value="Ribosomal_uL14"/>
    <property type="match status" value="1"/>
</dbReference>
<dbReference type="FunFam" id="2.40.150.20:FF:000001">
    <property type="entry name" value="50S ribosomal protein L14"/>
    <property type="match status" value="1"/>
</dbReference>
<dbReference type="Gene3D" id="2.40.150.20">
    <property type="entry name" value="Ribosomal protein L14"/>
    <property type="match status" value="1"/>
</dbReference>
<dbReference type="HAMAP" id="MF_01367">
    <property type="entry name" value="Ribosomal_uL14"/>
    <property type="match status" value="1"/>
</dbReference>
<dbReference type="InterPro" id="IPR000218">
    <property type="entry name" value="Ribosomal_uL14"/>
</dbReference>
<dbReference type="InterPro" id="IPR005745">
    <property type="entry name" value="Ribosomal_uL14_bac-type"/>
</dbReference>
<dbReference type="InterPro" id="IPR019972">
    <property type="entry name" value="Ribosomal_uL14_CS"/>
</dbReference>
<dbReference type="InterPro" id="IPR036853">
    <property type="entry name" value="Ribosomal_uL14_sf"/>
</dbReference>
<dbReference type="NCBIfam" id="TIGR01067">
    <property type="entry name" value="rplN_bact"/>
    <property type="match status" value="1"/>
</dbReference>
<dbReference type="PANTHER" id="PTHR11761">
    <property type="entry name" value="50S/60S RIBOSOMAL PROTEIN L14/L23"/>
    <property type="match status" value="1"/>
</dbReference>
<dbReference type="PANTHER" id="PTHR11761:SF3">
    <property type="entry name" value="LARGE RIBOSOMAL SUBUNIT PROTEIN UL14M"/>
    <property type="match status" value="1"/>
</dbReference>
<dbReference type="Pfam" id="PF00238">
    <property type="entry name" value="Ribosomal_L14"/>
    <property type="match status" value="1"/>
</dbReference>
<dbReference type="SMART" id="SM01374">
    <property type="entry name" value="Ribosomal_L14"/>
    <property type="match status" value="1"/>
</dbReference>
<dbReference type="SUPFAM" id="SSF50193">
    <property type="entry name" value="Ribosomal protein L14"/>
    <property type="match status" value="1"/>
</dbReference>
<dbReference type="PROSITE" id="PS00049">
    <property type="entry name" value="RIBOSOMAL_L14"/>
    <property type="match status" value="1"/>
</dbReference>
<protein>
    <recommendedName>
        <fullName evidence="1">Large ribosomal subunit protein uL14</fullName>
    </recommendedName>
    <alternativeName>
        <fullName evidence="2">50S ribosomal protein L14</fullName>
    </alternativeName>
</protein>
<name>RL14_STRA1</name>
<comment type="function">
    <text evidence="1">Binds to 23S rRNA. Forms part of two intersubunit bridges in the 70S ribosome.</text>
</comment>
<comment type="subunit">
    <text evidence="1">Part of the 50S ribosomal subunit. Forms a cluster with proteins L3 and L19. In the 70S ribosome, L14 and L19 interact and together make contacts with the 16S rRNA in bridges B5 and B8.</text>
</comment>
<comment type="similarity">
    <text evidence="1">Belongs to the universal ribosomal protein uL14 family.</text>
</comment>
<organism>
    <name type="scientific">Streptococcus agalactiae serotype Ia (strain ATCC 27591 / A909 / CDC SS700)</name>
    <dbReference type="NCBI Taxonomy" id="205921"/>
    <lineage>
        <taxon>Bacteria</taxon>
        <taxon>Bacillati</taxon>
        <taxon>Bacillota</taxon>
        <taxon>Bacilli</taxon>
        <taxon>Lactobacillales</taxon>
        <taxon>Streptococcaceae</taxon>
        <taxon>Streptococcus</taxon>
    </lineage>
</organism>
<sequence length="122" mass="13061">MIQQETRLKVADNSGAREILTIKVLGGSGRKFANIGDVIVASVKQATPGGAVKKGDVVKAVIVRTKTGARRPDGSYIKFDDNAAVIIRDDKTPRGTRIFGPVARELREGGYMKIVSLAPEVL</sequence>
<proteinExistence type="inferred from homology"/>
<accession>Q3K3V9</accession>
<reference key="1">
    <citation type="journal article" date="2005" name="Proc. Natl. Acad. Sci. U.S.A.">
        <title>Genome analysis of multiple pathogenic isolates of Streptococcus agalactiae: implications for the microbial 'pan-genome'.</title>
        <authorList>
            <person name="Tettelin H."/>
            <person name="Masignani V."/>
            <person name="Cieslewicz M.J."/>
            <person name="Donati C."/>
            <person name="Medini D."/>
            <person name="Ward N.L."/>
            <person name="Angiuoli S.V."/>
            <person name="Crabtree J."/>
            <person name="Jones A.L."/>
            <person name="Durkin A.S."/>
            <person name="DeBoy R.T."/>
            <person name="Davidsen T.M."/>
            <person name="Mora M."/>
            <person name="Scarselli M."/>
            <person name="Margarit y Ros I."/>
            <person name="Peterson J.D."/>
            <person name="Hauser C.R."/>
            <person name="Sundaram J.P."/>
            <person name="Nelson W.C."/>
            <person name="Madupu R."/>
            <person name="Brinkac L.M."/>
            <person name="Dodson R.J."/>
            <person name="Rosovitz M.J."/>
            <person name="Sullivan S.A."/>
            <person name="Daugherty S.C."/>
            <person name="Haft D.H."/>
            <person name="Selengut J."/>
            <person name="Gwinn M.L."/>
            <person name="Zhou L."/>
            <person name="Zafar N."/>
            <person name="Khouri H."/>
            <person name="Radune D."/>
            <person name="Dimitrov G."/>
            <person name="Watkins K."/>
            <person name="O'Connor K.J."/>
            <person name="Smith S."/>
            <person name="Utterback T.R."/>
            <person name="White O."/>
            <person name="Rubens C.E."/>
            <person name="Grandi G."/>
            <person name="Madoff L.C."/>
            <person name="Kasper D.L."/>
            <person name="Telford J.L."/>
            <person name="Wessels M.R."/>
            <person name="Rappuoli R."/>
            <person name="Fraser C.M."/>
        </authorList>
    </citation>
    <scope>NUCLEOTIDE SEQUENCE [LARGE SCALE GENOMIC DNA]</scope>
    <source>
        <strain>ATCC 27591 / A909 / CDC SS700</strain>
    </source>
</reference>
<keyword id="KW-0687">Ribonucleoprotein</keyword>
<keyword id="KW-0689">Ribosomal protein</keyword>
<keyword id="KW-0694">RNA-binding</keyword>
<keyword id="KW-0699">rRNA-binding</keyword>
<gene>
    <name evidence="1" type="primary">rplN</name>
    <name type="ordered locus">SAK_0101</name>
</gene>
<feature type="chain" id="PRO_1000055710" description="Large ribosomal subunit protein uL14">
    <location>
        <begin position="1"/>
        <end position="122"/>
    </location>
</feature>
<evidence type="ECO:0000255" key="1">
    <source>
        <dbReference type="HAMAP-Rule" id="MF_01367"/>
    </source>
</evidence>
<evidence type="ECO:0000305" key="2"/>